<sequence>MSNRSQFVPSWLVPEAAGDLPLTVSRLSLLALAAAFAVGYGAGFAVPLEVQAGVYLLGMVAMNLPHGGYEHFENLRRRAASFQGKYIVAYLVGIAAFGALFFVAPVAGLGLAVTVAVAKGGFGGVQSMDALYGTDHLRTRPQRWLAAVVRGGAVMVVPMLFWTDVFYAFSSVMISIFDPSAVSALGGDIATRRLVLGGGYGALVVAHLGLGYRRAAGTGSFLADAAETLLLIAYFALVPVVIAVGLYFPLWYSARQVARSSAVDDTAMTQADATGMLDALDADDPARATLASWAVLIVGSVATFGLAAVLWLLSPQPLGGGGILVGLVAFWSIFVSIIALPHVVVGGWLDRTRGIWYVP</sequence>
<evidence type="ECO:0000255" key="1">
    <source>
        <dbReference type="HAMAP-Rule" id="MF_02093"/>
    </source>
</evidence>
<evidence type="ECO:0000269" key="2">
    <source>
    </source>
</evidence>
<evidence type="ECO:0000305" key="3"/>
<gene>
    <name type="primary">brp</name>
    <name type="ordered locus">VNG_1465G</name>
</gene>
<comment type="function">
    <text evidence="2">Is required for retinal production and bacteriorhodopsin biogenesis. Probably catalyzes the cleavage of beta-carotene at its central double bond (15,15') to yield two molecules of all-trans-retinal.</text>
</comment>
<comment type="catalytic activity">
    <reaction evidence="1">
        <text>all-trans-beta-carotene + O2 = 2 all-trans-retinal</text>
        <dbReference type="Rhea" id="RHEA:32887"/>
        <dbReference type="ChEBI" id="CHEBI:15379"/>
        <dbReference type="ChEBI" id="CHEBI:17579"/>
        <dbReference type="ChEBI" id="CHEBI:17898"/>
        <dbReference type="EC" id="1.13.11.63"/>
    </reaction>
</comment>
<comment type="cofactor">
    <cofactor evidence="1">
        <name>Fe(2+)</name>
        <dbReference type="ChEBI" id="CHEBI:29033"/>
    </cofactor>
</comment>
<comment type="subcellular location">
    <subcellularLocation>
        <location evidence="1 3">Cell membrane</location>
        <topology evidence="1 3">Multi-pass membrane protein</topology>
    </subcellularLocation>
</comment>
<comment type="disruption phenotype">
    <text evidence="2">Cells lacking brp gene display a 4-fold decrease in bacteriorhodopsin levels compared with wild-type, whereas bacterioopsin levels are normal. Moreover, the beta-carotene level is increased by 3.8-fold, whereas that of retinal is decreased by 3.7-fold. Deletion of both brp and blh completely abolishes bacteriorhodopsin and retinal production, again without affecting bacterioopsin accumulation, and the level of beta-carotene is increased by 5.3-fold.</text>
</comment>
<comment type="similarity">
    <text evidence="1 3">Belongs to the Brp/Blh beta-carotene diooxygenase family.</text>
</comment>
<comment type="sequence caution" evidence="3">
    <conflict type="erroneous initiation">
        <sequence resource="EMBL-CDS" id="AAG19770"/>
    </conflict>
    <text>Extended N-terminus.</text>
</comment>
<dbReference type="EC" id="1.13.11.63" evidence="1"/>
<dbReference type="EMBL" id="AE004437">
    <property type="protein sequence ID" value="AAG19770.1"/>
    <property type="status" value="ALT_INIT"/>
    <property type="molecule type" value="Genomic_DNA"/>
</dbReference>
<dbReference type="PIR" id="F84300">
    <property type="entry name" value="F84300"/>
</dbReference>
<dbReference type="RefSeq" id="WP_012289335.1">
    <property type="nucleotide sequence ID" value="NC_002607.1"/>
</dbReference>
<dbReference type="STRING" id="64091.VNG_1465G"/>
<dbReference type="PaxDb" id="64091-VNG_1465G"/>
<dbReference type="KEGG" id="hal:VNG_1465G"/>
<dbReference type="PATRIC" id="fig|64091.14.peg.1120"/>
<dbReference type="HOGENOM" id="CLU_068196_0_0_2"/>
<dbReference type="InParanoid" id="Q9HPU7"/>
<dbReference type="OrthoDB" id="206064at2157"/>
<dbReference type="Proteomes" id="UP000000554">
    <property type="component" value="Chromosome"/>
</dbReference>
<dbReference type="GO" id="GO:0005886">
    <property type="term" value="C:plasma membrane"/>
    <property type="evidence" value="ECO:0007669"/>
    <property type="project" value="UniProtKB-SubCell"/>
</dbReference>
<dbReference type="GO" id="GO:0003834">
    <property type="term" value="F:beta-carotene 15,15'-dioxygenase activity"/>
    <property type="evidence" value="ECO:0007669"/>
    <property type="project" value="UniProtKB-EC"/>
</dbReference>
<dbReference type="GO" id="GO:0010436">
    <property type="term" value="F:carotenoid dioxygenase activity"/>
    <property type="evidence" value="ECO:0007669"/>
    <property type="project" value="UniProtKB-UniRule"/>
</dbReference>
<dbReference type="GO" id="GO:0005506">
    <property type="term" value="F:iron ion binding"/>
    <property type="evidence" value="ECO:0007669"/>
    <property type="project" value="UniProtKB-UniRule"/>
</dbReference>
<dbReference type="GO" id="GO:0016121">
    <property type="term" value="P:carotene catabolic process"/>
    <property type="evidence" value="ECO:0007669"/>
    <property type="project" value="UniProtKB-UniRule"/>
</dbReference>
<dbReference type="GO" id="GO:0042574">
    <property type="term" value="P:retinal metabolic process"/>
    <property type="evidence" value="ECO:0000315"/>
    <property type="project" value="UniProtKB"/>
</dbReference>
<dbReference type="HAMAP" id="MF_02093">
    <property type="entry name" value="Beta_carotene_diox"/>
    <property type="match status" value="1"/>
</dbReference>
<dbReference type="InterPro" id="IPR022270">
    <property type="entry name" value="Blh_diox"/>
</dbReference>
<dbReference type="NCBIfam" id="TIGR03753">
    <property type="entry name" value="blh_monoox"/>
    <property type="match status" value="1"/>
</dbReference>
<dbReference type="Pfam" id="PF15461">
    <property type="entry name" value="BCD"/>
    <property type="match status" value="1"/>
</dbReference>
<proteinExistence type="inferred from homology"/>
<accession>Q9HPU7</accession>
<reference key="1">
    <citation type="journal article" date="2000" name="Proc. Natl. Acad. Sci. U.S.A.">
        <title>Genome sequence of Halobacterium species NRC-1.</title>
        <authorList>
            <person name="Ng W.V."/>
            <person name="Kennedy S.P."/>
            <person name="Mahairas G.G."/>
            <person name="Berquist B."/>
            <person name="Pan M."/>
            <person name="Shukla H.D."/>
            <person name="Lasky S.R."/>
            <person name="Baliga N.S."/>
            <person name="Thorsson V."/>
            <person name="Sbrogna J."/>
            <person name="Swartzell S."/>
            <person name="Weir D."/>
            <person name="Hall J."/>
            <person name="Dahl T.A."/>
            <person name="Welti R."/>
            <person name="Goo Y.A."/>
            <person name="Leithauser B."/>
            <person name="Keller K."/>
            <person name="Cruz R."/>
            <person name="Danson M.J."/>
            <person name="Hough D.W."/>
            <person name="Maddocks D.G."/>
            <person name="Jablonski P.E."/>
            <person name="Krebs M.P."/>
            <person name="Angevine C.M."/>
            <person name="Dale H."/>
            <person name="Isenbarger T.A."/>
            <person name="Peck R.F."/>
            <person name="Pohlschroder M."/>
            <person name="Spudich J.L."/>
            <person name="Jung K.-H."/>
            <person name="Alam M."/>
            <person name="Freitas T."/>
            <person name="Hou S."/>
            <person name="Daniels C.J."/>
            <person name="Dennis P.P."/>
            <person name="Omer A.D."/>
            <person name="Ebhardt H."/>
            <person name="Lowe T.M."/>
            <person name="Liang P."/>
            <person name="Riley M."/>
            <person name="Hood L."/>
            <person name="DasSarma S."/>
        </authorList>
    </citation>
    <scope>NUCLEOTIDE SEQUENCE [LARGE SCALE GENOMIC DNA]</scope>
    <source>
        <strain>ATCC 700922 / JCM 11081 / NRC-1</strain>
    </source>
</reference>
<reference key="2">
    <citation type="journal article" date="2001" name="J. Biol. Chem.">
        <title>brp and blh are required for synthesis of the retinal cofactor of bacteriorhodopsin in Halobacterium salinarum.</title>
        <authorList>
            <person name="Peck R.F."/>
            <person name="Echavarri-Erasun C."/>
            <person name="Johnson E.A."/>
            <person name="Ng W.V."/>
            <person name="Kennedy S.P."/>
            <person name="Hood L."/>
            <person name="DasSarma S."/>
            <person name="Krebs M.P."/>
        </authorList>
    </citation>
    <scope>FUNCTION</scope>
    <scope>ROLE IN BACTERIORHODOPSIN AND RETINAL PRODUCTION</scope>
    <scope>DISRUPTION PHENOTYPE</scope>
    <source>
        <strain>MPK1</strain>
    </source>
</reference>
<organism>
    <name type="scientific">Halobacterium salinarum (strain ATCC 700922 / JCM 11081 / NRC-1)</name>
    <name type="common">Halobacterium halobium</name>
    <dbReference type="NCBI Taxonomy" id="64091"/>
    <lineage>
        <taxon>Archaea</taxon>
        <taxon>Methanobacteriati</taxon>
        <taxon>Methanobacteriota</taxon>
        <taxon>Stenosarchaea group</taxon>
        <taxon>Halobacteria</taxon>
        <taxon>Halobacteriales</taxon>
        <taxon>Halobacteriaceae</taxon>
        <taxon>Halobacterium</taxon>
        <taxon>Halobacterium salinarum NRC-34001</taxon>
    </lineage>
</organism>
<protein>
    <recommendedName>
        <fullName evidence="3">Probable beta-carotene 15,15'-dioxygenase Brp</fullName>
        <ecNumber evidence="1">1.13.11.63</ecNumber>
    </recommendedName>
    <alternativeName>
        <fullName>Bacteriorhodopsin-related protein</fullName>
    </alternativeName>
</protein>
<name>BRP_HALSA</name>
<keyword id="KW-1003">Cell membrane</keyword>
<keyword id="KW-0223">Dioxygenase</keyword>
<keyword id="KW-0408">Iron</keyword>
<keyword id="KW-0472">Membrane</keyword>
<keyword id="KW-0479">Metal-binding</keyword>
<keyword id="KW-0560">Oxidoreductase</keyword>
<keyword id="KW-1185">Reference proteome</keyword>
<keyword id="KW-0812">Transmembrane</keyword>
<keyword id="KW-1133">Transmembrane helix</keyword>
<feature type="chain" id="PRO_0000408496" description="Probable beta-carotene 15,15'-dioxygenase Brp">
    <location>
        <begin position="1"/>
        <end position="359"/>
    </location>
</feature>
<feature type="transmembrane region" description="Helical" evidence="1">
    <location>
        <begin position="27"/>
        <end position="47"/>
    </location>
</feature>
<feature type="transmembrane region" description="Helical" evidence="1">
    <location>
        <begin position="48"/>
        <end position="68"/>
    </location>
</feature>
<feature type="transmembrane region" description="Helical" evidence="1">
    <location>
        <begin position="87"/>
        <end position="107"/>
    </location>
</feature>
<feature type="transmembrane region" description="Helical" evidence="1">
    <location>
        <begin position="108"/>
        <end position="128"/>
    </location>
</feature>
<feature type="transmembrane region" description="Helical" evidence="1">
    <location>
        <begin position="154"/>
        <end position="174"/>
    </location>
</feature>
<feature type="transmembrane region" description="Helical" evidence="1">
    <location>
        <begin position="194"/>
        <end position="216"/>
    </location>
</feature>
<feature type="transmembrane region" description="Helical" evidence="1">
    <location>
        <begin position="229"/>
        <end position="249"/>
    </location>
</feature>
<feature type="transmembrane region" description="Helical" evidence="1">
    <location>
        <begin position="293"/>
        <end position="313"/>
    </location>
</feature>
<feature type="transmembrane region" description="Helical" evidence="1">
    <location>
        <begin position="320"/>
        <end position="340"/>
    </location>
</feature>